<sequence>MRKINDYYAKKAKKDNYPARSIYKLEEAQKKYDIISRGDSILDLGCFPGSWSIYASELAGPKGIVVGVDLQQAVGGGRADAAPIHWICEDIREPAMLEAVRRIRPSFRVLISDMAPKTTGNRWTDAQQSLNLCYQTLEIAEQVLLNKGNYICKVFQGGDFPDFVDAVKKRFESARVIKPQSSRIESREVFVLGLNYRKPQK</sequence>
<gene>
    <name evidence="1" type="primary">rlmE</name>
    <name evidence="1" type="synonym">ftsJ</name>
    <name evidence="1" type="synonym">rrmJ</name>
    <name type="ordered locus">DP2909</name>
</gene>
<comment type="function">
    <text evidence="1">Specifically methylates the uridine in position 2552 of 23S rRNA at the 2'-O position of the ribose in the fully assembled 50S ribosomal subunit.</text>
</comment>
<comment type="catalytic activity">
    <reaction evidence="1">
        <text>uridine(2552) in 23S rRNA + S-adenosyl-L-methionine = 2'-O-methyluridine(2552) in 23S rRNA + S-adenosyl-L-homocysteine + H(+)</text>
        <dbReference type="Rhea" id="RHEA:42720"/>
        <dbReference type="Rhea" id="RHEA-COMP:10202"/>
        <dbReference type="Rhea" id="RHEA-COMP:10203"/>
        <dbReference type="ChEBI" id="CHEBI:15378"/>
        <dbReference type="ChEBI" id="CHEBI:57856"/>
        <dbReference type="ChEBI" id="CHEBI:59789"/>
        <dbReference type="ChEBI" id="CHEBI:65315"/>
        <dbReference type="ChEBI" id="CHEBI:74478"/>
        <dbReference type="EC" id="2.1.1.166"/>
    </reaction>
</comment>
<comment type="subcellular location">
    <subcellularLocation>
        <location evidence="1">Cytoplasm</location>
    </subcellularLocation>
</comment>
<comment type="similarity">
    <text evidence="1">Belongs to the class I-like SAM-binding methyltransferase superfamily. RNA methyltransferase RlmE family.</text>
</comment>
<keyword id="KW-0963">Cytoplasm</keyword>
<keyword id="KW-0489">Methyltransferase</keyword>
<keyword id="KW-1185">Reference proteome</keyword>
<keyword id="KW-0698">rRNA processing</keyword>
<keyword id="KW-0949">S-adenosyl-L-methionine</keyword>
<keyword id="KW-0808">Transferase</keyword>
<organism>
    <name type="scientific">Desulfotalea psychrophila (strain LSv54 / DSM 12343)</name>
    <dbReference type="NCBI Taxonomy" id="177439"/>
    <lineage>
        <taxon>Bacteria</taxon>
        <taxon>Pseudomonadati</taxon>
        <taxon>Thermodesulfobacteriota</taxon>
        <taxon>Desulfobulbia</taxon>
        <taxon>Desulfobulbales</taxon>
        <taxon>Desulfocapsaceae</taxon>
        <taxon>Desulfotalea</taxon>
    </lineage>
</organism>
<evidence type="ECO:0000255" key="1">
    <source>
        <dbReference type="HAMAP-Rule" id="MF_01547"/>
    </source>
</evidence>
<reference key="1">
    <citation type="journal article" date="2004" name="Environ. Microbiol.">
        <title>The genome of Desulfotalea psychrophila, a sulfate-reducing bacterium from permanently cold Arctic sediments.</title>
        <authorList>
            <person name="Rabus R."/>
            <person name="Ruepp A."/>
            <person name="Frickey T."/>
            <person name="Rattei T."/>
            <person name="Fartmann B."/>
            <person name="Stark M."/>
            <person name="Bauer M."/>
            <person name="Zibat A."/>
            <person name="Lombardot T."/>
            <person name="Becker I."/>
            <person name="Amann J."/>
            <person name="Gellner K."/>
            <person name="Teeling H."/>
            <person name="Leuschner W.D."/>
            <person name="Gloeckner F.-O."/>
            <person name="Lupas A.N."/>
            <person name="Amann R."/>
            <person name="Klenk H.-P."/>
        </authorList>
    </citation>
    <scope>NUCLEOTIDE SEQUENCE [LARGE SCALE GENOMIC DNA]</scope>
    <source>
        <strain>DSM 12343 / LSv54</strain>
    </source>
</reference>
<proteinExistence type="inferred from homology"/>
<feature type="chain" id="PRO_0000155491" description="Ribosomal RNA large subunit methyltransferase E">
    <location>
        <begin position="1"/>
        <end position="201"/>
    </location>
</feature>
<feature type="active site" description="Proton acceptor" evidence="1">
    <location>
        <position position="153"/>
    </location>
</feature>
<feature type="binding site" evidence="1">
    <location>
        <position position="49"/>
    </location>
    <ligand>
        <name>S-adenosyl-L-methionine</name>
        <dbReference type="ChEBI" id="CHEBI:59789"/>
    </ligand>
</feature>
<feature type="binding site" evidence="1">
    <location>
        <position position="51"/>
    </location>
    <ligand>
        <name>S-adenosyl-L-methionine</name>
        <dbReference type="ChEBI" id="CHEBI:59789"/>
    </ligand>
</feature>
<feature type="binding site" evidence="1">
    <location>
        <position position="69"/>
    </location>
    <ligand>
        <name>S-adenosyl-L-methionine</name>
        <dbReference type="ChEBI" id="CHEBI:59789"/>
    </ligand>
</feature>
<feature type="binding site" evidence="1">
    <location>
        <position position="90"/>
    </location>
    <ligand>
        <name>S-adenosyl-L-methionine</name>
        <dbReference type="ChEBI" id="CHEBI:59789"/>
    </ligand>
</feature>
<feature type="binding site" evidence="1">
    <location>
        <position position="113"/>
    </location>
    <ligand>
        <name>S-adenosyl-L-methionine</name>
        <dbReference type="ChEBI" id="CHEBI:59789"/>
    </ligand>
</feature>
<name>RLME_DESPS</name>
<dbReference type="EC" id="2.1.1.166" evidence="1"/>
<dbReference type="EMBL" id="CR522870">
    <property type="protein sequence ID" value="CAG37638.1"/>
    <property type="molecule type" value="Genomic_DNA"/>
</dbReference>
<dbReference type="RefSeq" id="WP_011190150.1">
    <property type="nucleotide sequence ID" value="NC_006138.1"/>
</dbReference>
<dbReference type="SMR" id="Q6AJ42"/>
<dbReference type="STRING" id="177439.DP2909"/>
<dbReference type="KEGG" id="dps:DP2909"/>
<dbReference type="eggNOG" id="COG0293">
    <property type="taxonomic scope" value="Bacteria"/>
</dbReference>
<dbReference type="HOGENOM" id="CLU_009422_4_0_7"/>
<dbReference type="OrthoDB" id="9790080at2"/>
<dbReference type="Proteomes" id="UP000000602">
    <property type="component" value="Chromosome"/>
</dbReference>
<dbReference type="GO" id="GO:0005737">
    <property type="term" value="C:cytoplasm"/>
    <property type="evidence" value="ECO:0007669"/>
    <property type="project" value="UniProtKB-SubCell"/>
</dbReference>
<dbReference type="GO" id="GO:0008650">
    <property type="term" value="F:rRNA (uridine-2'-O-)-methyltransferase activity"/>
    <property type="evidence" value="ECO:0007669"/>
    <property type="project" value="UniProtKB-UniRule"/>
</dbReference>
<dbReference type="Gene3D" id="3.40.50.150">
    <property type="entry name" value="Vaccinia Virus protein VP39"/>
    <property type="match status" value="1"/>
</dbReference>
<dbReference type="HAMAP" id="MF_01547">
    <property type="entry name" value="RNA_methyltr_E"/>
    <property type="match status" value="1"/>
</dbReference>
<dbReference type="InterPro" id="IPR050082">
    <property type="entry name" value="RNA_methyltr_RlmE"/>
</dbReference>
<dbReference type="InterPro" id="IPR002877">
    <property type="entry name" value="RNA_MeTrfase_FtsJ_dom"/>
</dbReference>
<dbReference type="InterPro" id="IPR015507">
    <property type="entry name" value="rRNA-MeTfrase_E"/>
</dbReference>
<dbReference type="InterPro" id="IPR029063">
    <property type="entry name" value="SAM-dependent_MTases_sf"/>
</dbReference>
<dbReference type="PANTHER" id="PTHR10920">
    <property type="entry name" value="RIBOSOMAL RNA METHYLTRANSFERASE"/>
    <property type="match status" value="1"/>
</dbReference>
<dbReference type="PANTHER" id="PTHR10920:SF18">
    <property type="entry name" value="RRNA METHYLTRANSFERASE 2, MITOCHONDRIAL"/>
    <property type="match status" value="1"/>
</dbReference>
<dbReference type="Pfam" id="PF01728">
    <property type="entry name" value="FtsJ"/>
    <property type="match status" value="1"/>
</dbReference>
<dbReference type="PIRSF" id="PIRSF005461">
    <property type="entry name" value="23S_rRNA_mtase"/>
    <property type="match status" value="1"/>
</dbReference>
<dbReference type="SUPFAM" id="SSF53335">
    <property type="entry name" value="S-adenosyl-L-methionine-dependent methyltransferases"/>
    <property type="match status" value="1"/>
</dbReference>
<accession>Q6AJ42</accession>
<protein>
    <recommendedName>
        <fullName evidence="1">Ribosomal RNA large subunit methyltransferase E</fullName>
        <ecNumber evidence="1">2.1.1.166</ecNumber>
    </recommendedName>
    <alternativeName>
        <fullName evidence="1">23S rRNA Um2552 methyltransferase</fullName>
    </alternativeName>
    <alternativeName>
        <fullName evidence="1">rRNA (uridine-2'-O-)-methyltransferase</fullName>
    </alternativeName>
</protein>